<keyword id="KW-0997">Cell inner membrane</keyword>
<keyword id="KW-1003">Cell membrane</keyword>
<keyword id="KW-0472">Membrane</keyword>
<keyword id="KW-0520">NAD</keyword>
<keyword id="KW-0874">Quinone</keyword>
<keyword id="KW-1278">Translocase</keyword>
<keyword id="KW-0812">Transmembrane</keyword>
<keyword id="KW-1133">Transmembrane helix</keyword>
<keyword id="KW-0813">Transport</keyword>
<keyword id="KW-0830">Ubiquinone</keyword>
<comment type="function">
    <text evidence="1">NDH-1 shuttles electrons from NADH, via FMN and iron-sulfur (Fe-S) centers, to quinones in the respiratory chain. The immediate electron acceptor for the enzyme in this species is believed to be ubiquinone. Couples the redox reaction to proton translocation (for every two electrons transferred, four hydrogen ions are translocated across the cytoplasmic membrane), and thus conserves the redox energy in a proton gradient.</text>
</comment>
<comment type="catalytic activity">
    <reaction evidence="1">
        <text>a quinone + NADH + 5 H(+)(in) = a quinol + NAD(+) + 4 H(+)(out)</text>
        <dbReference type="Rhea" id="RHEA:57888"/>
        <dbReference type="ChEBI" id="CHEBI:15378"/>
        <dbReference type="ChEBI" id="CHEBI:24646"/>
        <dbReference type="ChEBI" id="CHEBI:57540"/>
        <dbReference type="ChEBI" id="CHEBI:57945"/>
        <dbReference type="ChEBI" id="CHEBI:132124"/>
    </reaction>
</comment>
<comment type="subunit">
    <text evidence="1">NDH-1 is composed of 14 different subunits. Subunits NuoA, H, J, K, L, M, N constitute the membrane sector of the complex.</text>
</comment>
<comment type="subcellular location">
    <subcellularLocation>
        <location evidence="1">Cell inner membrane</location>
        <topology evidence="1">Multi-pass membrane protein</topology>
    </subcellularLocation>
</comment>
<comment type="similarity">
    <text evidence="1">Belongs to the complex I subunit 2 family.</text>
</comment>
<protein>
    <recommendedName>
        <fullName evidence="1">NADH-quinone oxidoreductase subunit N</fullName>
        <ecNumber evidence="1">7.1.1.-</ecNumber>
    </recommendedName>
    <alternativeName>
        <fullName evidence="1">NADH dehydrogenase I subunit N</fullName>
    </alternativeName>
    <alternativeName>
        <fullName evidence="1">NDH-1 subunit N</fullName>
    </alternativeName>
</protein>
<accession>Q31HE7</accession>
<organism>
    <name type="scientific">Hydrogenovibrio crunogenus (strain DSM 25203 / XCL-2)</name>
    <name type="common">Thiomicrospira crunogena</name>
    <dbReference type="NCBI Taxonomy" id="317025"/>
    <lineage>
        <taxon>Bacteria</taxon>
        <taxon>Pseudomonadati</taxon>
        <taxon>Pseudomonadota</taxon>
        <taxon>Gammaproteobacteria</taxon>
        <taxon>Thiotrichales</taxon>
        <taxon>Piscirickettsiaceae</taxon>
        <taxon>Hydrogenovibrio</taxon>
    </lineage>
</organism>
<reference key="1">
    <citation type="journal article" date="2006" name="PLoS Biol.">
        <title>The genome of deep-sea vent chemolithoautotroph Thiomicrospira crunogena XCL-2.</title>
        <authorList>
            <person name="Scott K.M."/>
            <person name="Sievert S.M."/>
            <person name="Abril F.N."/>
            <person name="Ball L.A."/>
            <person name="Barrett C.J."/>
            <person name="Blake R.A."/>
            <person name="Boller A.J."/>
            <person name="Chain P.S.G."/>
            <person name="Clark J.A."/>
            <person name="Davis C.R."/>
            <person name="Detter C."/>
            <person name="Do K.F."/>
            <person name="Dobrinski K.P."/>
            <person name="Faza B.I."/>
            <person name="Fitzpatrick K.A."/>
            <person name="Freyermuth S.K."/>
            <person name="Harmer T.L."/>
            <person name="Hauser L.J."/>
            <person name="Huegler M."/>
            <person name="Kerfeld C.A."/>
            <person name="Klotz M.G."/>
            <person name="Kong W.W."/>
            <person name="Land M."/>
            <person name="Lapidus A."/>
            <person name="Larimer F.W."/>
            <person name="Longo D.L."/>
            <person name="Lucas S."/>
            <person name="Malfatti S.A."/>
            <person name="Massey S.E."/>
            <person name="Martin D.D."/>
            <person name="McCuddin Z."/>
            <person name="Meyer F."/>
            <person name="Moore J.L."/>
            <person name="Ocampo L.H. Jr."/>
            <person name="Paul J.H."/>
            <person name="Paulsen I.T."/>
            <person name="Reep D.K."/>
            <person name="Ren Q."/>
            <person name="Ross R.L."/>
            <person name="Sato P.Y."/>
            <person name="Thomas P."/>
            <person name="Tinkham L.E."/>
            <person name="Zeruth G.T."/>
        </authorList>
    </citation>
    <scope>NUCLEOTIDE SEQUENCE [LARGE SCALE GENOMIC DNA]</scope>
    <source>
        <strain>DSM 25203 / XCL-2</strain>
    </source>
</reference>
<proteinExistence type="inferred from homology"/>
<dbReference type="EC" id="7.1.1.-" evidence="1"/>
<dbReference type="EMBL" id="CP000109">
    <property type="protein sequence ID" value="ABB41426.1"/>
    <property type="molecule type" value="Genomic_DNA"/>
</dbReference>
<dbReference type="SMR" id="Q31HE7"/>
<dbReference type="STRING" id="317025.Tcr_0830"/>
<dbReference type="KEGG" id="tcx:Tcr_0830"/>
<dbReference type="eggNOG" id="COG1007">
    <property type="taxonomic scope" value="Bacteria"/>
</dbReference>
<dbReference type="HOGENOM" id="CLU_007100_1_3_6"/>
<dbReference type="OrthoDB" id="9768329at2"/>
<dbReference type="GO" id="GO:0005886">
    <property type="term" value="C:plasma membrane"/>
    <property type="evidence" value="ECO:0007669"/>
    <property type="project" value="UniProtKB-SubCell"/>
</dbReference>
<dbReference type="GO" id="GO:0008137">
    <property type="term" value="F:NADH dehydrogenase (ubiquinone) activity"/>
    <property type="evidence" value="ECO:0007669"/>
    <property type="project" value="InterPro"/>
</dbReference>
<dbReference type="GO" id="GO:0050136">
    <property type="term" value="F:NADH:ubiquinone reductase (non-electrogenic) activity"/>
    <property type="evidence" value="ECO:0007669"/>
    <property type="project" value="UniProtKB-UniRule"/>
</dbReference>
<dbReference type="GO" id="GO:0048038">
    <property type="term" value="F:quinone binding"/>
    <property type="evidence" value="ECO:0007669"/>
    <property type="project" value="UniProtKB-KW"/>
</dbReference>
<dbReference type="GO" id="GO:0042773">
    <property type="term" value="P:ATP synthesis coupled electron transport"/>
    <property type="evidence" value="ECO:0007669"/>
    <property type="project" value="InterPro"/>
</dbReference>
<dbReference type="HAMAP" id="MF_00445">
    <property type="entry name" value="NDH1_NuoN_1"/>
    <property type="match status" value="1"/>
</dbReference>
<dbReference type="InterPro" id="IPR010096">
    <property type="entry name" value="NADH-Q_OxRdtase_suN/2"/>
</dbReference>
<dbReference type="InterPro" id="IPR001750">
    <property type="entry name" value="ND/Mrp_TM"/>
</dbReference>
<dbReference type="NCBIfam" id="TIGR01770">
    <property type="entry name" value="NDH_I_N"/>
    <property type="match status" value="1"/>
</dbReference>
<dbReference type="NCBIfam" id="NF004442">
    <property type="entry name" value="PRK05777.1-5"/>
    <property type="match status" value="1"/>
</dbReference>
<dbReference type="PANTHER" id="PTHR22773">
    <property type="entry name" value="NADH DEHYDROGENASE"/>
    <property type="match status" value="1"/>
</dbReference>
<dbReference type="Pfam" id="PF00361">
    <property type="entry name" value="Proton_antipo_M"/>
    <property type="match status" value="1"/>
</dbReference>
<dbReference type="PRINTS" id="PR01434">
    <property type="entry name" value="NADHDHGNASE5"/>
</dbReference>
<feature type="chain" id="PRO_0000391244" description="NADH-quinone oxidoreductase subunit N">
    <location>
        <begin position="1"/>
        <end position="478"/>
    </location>
</feature>
<feature type="transmembrane region" description="Helical" evidence="1">
    <location>
        <begin position="7"/>
        <end position="27"/>
    </location>
</feature>
<feature type="transmembrane region" description="Helical" evidence="1">
    <location>
        <begin position="46"/>
        <end position="66"/>
    </location>
</feature>
<feature type="transmembrane region" description="Helical" evidence="1">
    <location>
        <begin position="74"/>
        <end position="94"/>
    </location>
</feature>
<feature type="transmembrane region" description="Helical" evidence="1">
    <location>
        <begin position="109"/>
        <end position="129"/>
    </location>
</feature>
<feature type="transmembrane region" description="Helical" evidence="1">
    <location>
        <begin position="163"/>
        <end position="183"/>
    </location>
</feature>
<feature type="transmembrane region" description="Helical" evidence="1">
    <location>
        <begin position="204"/>
        <end position="224"/>
    </location>
</feature>
<feature type="transmembrane region" description="Helical" evidence="1">
    <location>
        <begin position="237"/>
        <end position="257"/>
    </location>
</feature>
<feature type="transmembrane region" description="Helical" evidence="1">
    <location>
        <begin position="273"/>
        <end position="293"/>
    </location>
</feature>
<feature type="transmembrane region" description="Helical" evidence="1">
    <location>
        <begin position="300"/>
        <end position="320"/>
    </location>
</feature>
<feature type="transmembrane region" description="Helical" evidence="1">
    <location>
        <begin position="328"/>
        <end position="348"/>
    </location>
</feature>
<feature type="transmembrane region" description="Helical" evidence="1">
    <location>
        <begin position="371"/>
        <end position="391"/>
    </location>
</feature>
<feature type="transmembrane region" description="Helical" evidence="1">
    <location>
        <begin position="405"/>
        <end position="425"/>
    </location>
</feature>
<feature type="transmembrane region" description="Helical" evidence="1">
    <location>
        <begin position="451"/>
        <end position="471"/>
    </location>
</feature>
<sequence length="478" mass="52541">MNFVIPSFIPAIPEIVLLTLTSLLLIADTIWSKRSEFATYYATQLILLVVGYLVLTSFSTSQVLTFDGSFVRDAFGDILKLVIVVVSMGIFLFSKEYLLQNKFYRGEYFTLGLFGVLGMFVMVSAYNLITMYLGLEIMSLALYAMVAMRKDNQHALEAAMKYFVLGALATGMLLYGFSMIYGATGSIQFDEMAQIIASGNVDNVVLSFGVVFIVIGLAFKLGAVPFHMWVPDVYHGAPTAVTLYIGTAPKIAAFAMLYRILVEGLPGLVEDWQSLIVMISVLSLIVGAVITLVQENLKRLLAYSGIGHIGFILLGIIAANPDGYSAAMFYTIVYSITALAGFGMIVALARTNNEFDLVADFKGMNKRNPWLALMMLFIMFSMAGIPPFVGFYAKVVVIEEVVQAGFTWLAVLAVVMAVISAFYYLRVVKVMYFDEPEDNTKIEPVSSQLNWAVSFVSIALLLLGLMPSSLITLCYNSL</sequence>
<evidence type="ECO:0000255" key="1">
    <source>
        <dbReference type="HAMAP-Rule" id="MF_00445"/>
    </source>
</evidence>
<name>NUON_HYDCU</name>
<gene>
    <name evidence="1" type="primary">nuoN</name>
    <name type="ordered locus">Tcr_0830</name>
</gene>